<name>EZRA_STAES</name>
<gene>
    <name evidence="1" type="primary">ezrA</name>
    <name type="ordered locus">SE_1393</name>
</gene>
<sequence length="564" mass="66526">MVLFIILAILVVILIAIGVLFYMRSNKRNLIEKTEERKNEIEQLPLDDNLRKLTGLNLKGETKTKYDAMKKDNTETTNKYLAPVEEKIQNAEELLEKFKFTAAQTEIDDAHELMDQYEENYQHQVTQVDDIINLHKENEALYEKCKVDYREMKRDVLANRHQFGEAAEPLENEIENYEPKLNEYENLKSEGNYVQAHNHIAALEDQIKNLKSYMDEIPELIRETQKELPGQFQDLKYGCRDLKVEGYDLDHVKVDGTIQSLKTELSFVEPMISRLELDEANNKLENINDKLDEMYDLIEYEVKAKNEVEETKDIITDDLFKAKDMNYTLQTEIEYVRENYYINESDAQSVRQFENEIQSLISVYDDILKETSKSAVRYSEVQDNLQYLEDHVSVINKEQDKLQNHLIQLREDEAEAEDNLLRVQSKKEEVYRRLLASNLTSVPERFIIMKNEIDNEVREVNEQFRERPIHVKQLKDKVAKIVIQMNTFEDEANDVLVNAVYAEKLIQYGNRYRKDHHHVDKSLNEAERLFKNNRYKRAIEIAEEALESVEPGITKHIEEQVIKE</sequence>
<feature type="chain" id="PRO_0000172884" description="Septation ring formation regulator EzrA">
    <location>
        <begin position="1"/>
        <end position="564"/>
    </location>
</feature>
<feature type="topological domain" description="Extracellular" evidence="1">
    <location>
        <begin position="1"/>
        <end position="4"/>
    </location>
</feature>
<feature type="transmembrane region" description="Helical" evidence="1">
    <location>
        <begin position="5"/>
        <end position="23"/>
    </location>
</feature>
<feature type="topological domain" description="Cytoplasmic" evidence="1">
    <location>
        <begin position="24"/>
        <end position="564"/>
    </location>
</feature>
<feature type="coiled-coil region" evidence="1">
    <location>
        <begin position="84"/>
        <end position="126"/>
    </location>
</feature>
<feature type="coiled-coil region" evidence="1">
    <location>
        <begin position="165"/>
        <end position="223"/>
    </location>
</feature>
<feature type="coiled-coil region" evidence="1">
    <location>
        <begin position="271"/>
        <end position="303"/>
    </location>
</feature>
<feature type="coiled-coil region" evidence="1">
    <location>
        <begin position="350"/>
        <end position="435"/>
    </location>
</feature>
<dbReference type="EMBL" id="AE015929">
    <property type="protein sequence ID" value="AAO04992.1"/>
    <property type="molecule type" value="Genomic_DNA"/>
</dbReference>
<dbReference type="RefSeq" id="NP_764948.1">
    <property type="nucleotide sequence ID" value="NC_004461.1"/>
</dbReference>
<dbReference type="RefSeq" id="WP_001830796.1">
    <property type="nucleotide sequence ID" value="NZ_WBME01000070.1"/>
</dbReference>
<dbReference type="SMR" id="Q8CNW5"/>
<dbReference type="KEGG" id="sep:SE_1393"/>
<dbReference type="PATRIC" id="fig|176280.10.peg.1361"/>
<dbReference type="eggNOG" id="COG4477">
    <property type="taxonomic scope" value="Bacteria"/>
</dbReference>
<dbReference type="HOGENOM" id="CLU_034079_1_0_9"/>
<dbReference type="OrthoDB" id="1654473at2"/>
<dbReference type="Proteomes" id="UP000001411">
    <property type="component" value="Chromosome"/>
</dbReference>
<dbReference type="GO" id="GO:0005886">
    <property type="term" value="C:plasma membrane"/>
    <property type="evidence" value="ECO:0007669"/>
    <property type="project" value="UniProtKB-SubCell"/>
</dbReference>
<dbReference type="GO" id="GO:0005940">
    <property type="term" value="C:septin ring"/>
    <property type="evidence" value="ECO:0007669"/>
    <property type="project" value="InterPro"/>
</dbReference>
<dbReference type="GO" id="GO:0000917">
    <property type="term" value="P:division septum assembly"/>
    <property type="evidence" value="ECO:0007669"/>
    <property type="project" value="UniProtKB-KW"/>
</dbReference>
<dbReference type="GO" id="GO:0000921">
    <property type="term" value="P:septin ring assembly"/>
    <property type="evidence" value="ECO:0007669"/>
    <property type="project" value="InterPro"/>
</dbReference>
<dbReference type="HAMAP" id="MF_00728">
    <property type="entry name" value="EzrA"/>
    <property type="match status" value="1"/>
</dbReference>
<dbReference type="InterPro" id="IPR010379">
    <property type="entry name" value="EzrA"/>
</dbReference>
<dbReference type="NCBIfam" id="NF003412">
    <property type="entry name" value="PRK04778.1-6"/>
    <property type="match status" value="1"/>
</dbReference>
<dbReference type="Pfam" id="PF06160">
    <property type="entry name" value="EzrA"/>
    <property type="match status" value="1"/>
</dbReference>
<comment type="function">
    <text evidence="1">Negative regulator of FtsZ ring formation; modulates the frequency and position of FtsZ ring formation. Inhibits FtsZ ring formation at polar sites. Interacts either with FtsZ or with one of its binding partners to promote depolymerization.</text>
</comment>
<comment type="subcellular location">
    <subcellularLocation>
        <location>Cell membrane</location>
        <topology>Single-pass membrane protein</topology>
    </subcellularLocation>
    <text evidence="1">Colocalized with FtsZ to the nascent septal site.</text>
</comment>
<comment type="similarity">
    <text evidence="1">Belongs to the EzrA family.</text>
</comment>
<accession>Q8CNW5</accession>
<reference key="1">
    <citation type="journal article" date="2003" name="Mol. Microbiol.">
        <title>Genome-based analysis of virulence genes in a non-biofilm-forming Staphylococcus epidermidis strain (ATCC 12228).</title>
        <authorList>
            <person name="Zhang Y.-Q."/>
            <person name="Ren S.-X."/>
            <person name="Li H.-L."/>
            <person name="Wang Y.-X."/>
            <person name="Fu G."/>
            <person name="Yang J."/>
            <person name="Qin Z.-Q."/>
            <person name="Miao Y.-G."/>
            <person name="Wang W.-Y."/>
            <person name="Chen R.-S."/>
            <person name="Shen Y."/>
            <person name="Chen Z."/>
            <person name="Yuan Z.-H."/>
            <person name="Zhao G.-P."/>
            <person name="Qu D."/>
            <person name="Danchin A."/>
            <person name="Wen Y.-M."/>
        </authorList>
    </citation>
    <scope>NUCLEOTIDE SEQUENCE [LARGE SCALE GENOMIC DNA]</scope>
    <source>
        <strain>ATCC 12228 / FDA PCI 1200</strain>
    </source>
</reference>
<proteinExistence type="inferred from homology"/>
<evidence type="ECO:0000255" key="1">
    <source>
        <dbReference type="HAMAP-Rule" id="MF_00728"/>
    </source>
</evidence>
<protein>
    <recommendedName>
        <fullName evidence="1">Septation ring formation regulator EzrA</fullName>
    </recommendedName>
</protein>
<keyword id="KW-0131">Cell cycle</keyword>
<keyword id="KW-0132">Cell division</keyword>
<keyword id="KW-1003">Cell membrane</keyword>
<keyword id="KW-0175">Coiled coil</keyword>
<keyword id="KW-0472">Membrane</keyword>
<keyword id="KW-0717">Septation</keyword>
<keyword id="KW-0812">Transmembrane</keyword>
<keyword id="KW-1133">Transmembrane helix</keyword>
<organism>
    <name type="scientific">Staphylococcus epidermidis (strain ATCC 12228 / FDA PCI 1200)</name>
    <dbReference type="NCBI Taxonomy" id="176280"/>
    <lineage>
        <taxon>Bacteria</taxon>
        <taxon>Bacillati</taxon>
        <taxon>Bacillota</taxon>
        <taxon>Bacilli</taxon>
        <taxon>Bacillales</taxon>
        <taxon>Staphylococcaceae</taxon>
        <taxon>Staphylococcus</taxon>
    </lineage>
</organism>